<accession>Q5LWR2</accession>
<keyword id="KW-0067">ATP-binding</keyword>
<keyword id="KW-0963">Cytoplasm</keyword>
<keyword id="KW-0436">Ligase</keyword>
<keyword id="KW-0547">Nucleotide-binding</keyword>
<keyword id="KW-0566">Pantothenate biosynthesis</keyword>
<keyword id="KW-1185">Reference proteome</keyword>
<gene>
    <name evidence="1" type="primary">panC</name>
    <name type="ordered locus">SPO0103</name>
</gene>
<feature type="chain" id="PRO_0000305555" description="Pantothenate synthetase">
    <location>
        <begin position="1"/>
        <end position="285"/>
    </location>
</feature>
<feature type="active site" description="Proton donor" evidence="1">
    <location>
        <position position="39"/>
    </location>
</feature>
<feature type="binding site" evidence="1">
    <location>
        <begin position="32"/>
        <end position="39"/>
    </location>
    <ligand>
        <name>ATP</name>
        <dbReference type="ChEBI" id="CHEBI:30616"/>
    </ligand>
</feature>
<feature type="binding site" evidence="1">
    <location>
        <position position="63"/>
    </location>
    <ligand>
        <name>(R)-pantoate</name>
        <dbReference type="ChEBI" id="CHEBI:15980"/>
    </ligand>
</feature>
<feature type="binding site" evidence="1">
    <location>
        <position position="63"/>
    </location>
    <ligand>
        <name>beta-alanine</name>
        <dbReference type="ChEBI" id="CHEBI:57966"/>
    </ligand>
</feature>
<feature type="binding site" evidence="1">
    <location>
        <begin position="149"/>
        <end position="152"/>
    </location>
    <ligand>
        <name>ATP</name>
        <dbReference type="ChEBI" id="CHEBI:30616"/>
    </ligand>
</feature>
<feature type="binding site" evidence="1">
    <location>
        <position position="155"/>
    </location>
    <ligand>
        <name>(R)-pantoate</name>
        <dbReference type="ChEBI" id="CHEBI:15980"/>
    </ligand>
</feature>
<feature type="binding site" evidence="1">
    <location>
        <position position="178"/>
    </location>
    <ligand>
        <name>ATP</name>
        <dbReference type="ChEBI" id="CHEBI:30616"/>
    </ligand>
</feature>
<feature type="binding site" evidence="1">
    <location>
        <begin position="186"/>
        <end position="189"/>
    </location>
    <ligand>
        <name>ATP</name>
        <dbReference type="ChEBI" id="CHEBI:30616"/>
    </ligand>
</feature>
<organism>
    <name type="scientific">Ruegeria pomeroyi (strain ATCC 700808 / DSM 15171 / DSS-3)</name>
    <name type="common">Silicibacter pomeroyi</name>
    <dbReference type="NCBI Taxonomy" id="246200"/>
    <lineage>
        <taxon>Bacteria</taxon>
        <taxon>Pseudomonadati</taxon>
        <taxon>Pseudomonadota</taxon>
        <taxon>Alphaproteobacteria</taxon>
        <taxon>Rhodobacterales</taxon>
        <taxon>Roseobacteraceae</taxon>
        <taxon>Ruegeria</taxon>
    </lineage>
</organism>
<reference key="1">
    <citation type="journal article" date="2004" name="Nature">
        <title>Genome sequence of Silicibacter pomeroyi reveals adaptations to the marine environment.</title>
        <authorList>
            <person name="Moran M.A."/>
            <person name="Buchan A."/>
            <person name="Gonzalez J.M."/>
            <person name="Heidelberg J.F."/>
            <person name="Whitman W.B."/>
            <person name="Kiene R.P."/>
            <person name="Henriksen J.R."/>
            <person name="King G.M."/>
            <person name="Belas R."/>
            <person name="Fuqua C."/>
            <person name="Brinkac L.M."/>
            <person name="Lewis M."/>
            <person name="Johri S."/>
            <person name="Weaver B."/>
            <person name="Pai G."/>
            <person name="Eisen J.A."/>
            <person name="Rahe E."/>
            <person name="Sheldon W.M."/>
            <person name="Ye W."/>
            <person name="Miller T.R."/>
            <person name="Carlton J."/>
            <person name="Rasko D.A."/>
            <person name="Paulsen I.T."/>
            <person name="Ren Q."/>
            <person name="Daugherty S.C."/>
            <person name="DeBoy R.T."/>
            <person name="Dodson R.J."/>
            <person name="Durkin A.S."/>
            <person name="Madupu R."/>
            <person name="Nelson W.C."/>
            <person name="Sullivan S.A."/>
            <person name="Rosovitz M.J."/>
            <person name="Haft D.H."/>
            <person name="Selengut J."/>
            <person name="Ward N."/>
        </authorList>
    </citation>
    <scope>NUCLEOTIDE SEQUENCE [LARGE SCALE GENOMIC DNA]</scope>
    <source>
        <strain>ATCC 700808 / DSM 15171 / DSS-3</strain>
    </source>
</reference>
<reference key="2">
    <citation type="journal article" date="2014" name="Stand. Genomic Sci.">
        <title>An updated genome annotation for the model marine bacterium Ruegeria pomeroyi DSS-3.</title>
        <authorList>
            <person name="Rivers A.R."/>
            <person name="Smith C.B."/>
            <person name="Moran M.A."/>
        </authorList>
    </citation>
    <scope>GENOME REANNOTATION</scope>
    <source>
        <strain>ATCC 700808 / DSM 15171 / DSS-3</strain>
    </source>
</reference>
<name>PANC_RUEPO</name>
<protein>
    <recommendedName>
        <fullName evidence="1">Pantothenate synthetase</fullName>
        <shortName evidence="1">PS</shortName>
        <ecNumber evidence="1">6.3.2.1</ecNumber>
    </recommendedName>
    <alternativeName>
        <fullName evidence="1">Pantoate--beta-alanine ligase</fullName>
    </alternativeName>
    <alternativeName>
        <fullName evidence="1">Pantoate-activating enzyme</fullName>
    </alternativeName>
</protein>
<evidence type="ECO:0000255" key="1">
    <source>
        <dbReference type="HAMAP-Rule" id="MF_00158"/>
    </source>
</evidence>
<comment type="function">
    <text evidence="1">Catalyzes the condensation of pantoate with beta-alanine in an ATP-dependent reaction via a pantoyl-adenylate intermediate.</text>
</comment>
<comment type="catalytic activity">
    <reaction evidence="1">
        <text>(R)-pantoate + beta-alanine + ATP = (R)-pantothenate + AMP + diphosphate + H(+)</text>
        <dbReference type="Rhea" id="RHEA:10912"/>
        <dbReference type="ChEBI" id="CHEBI:15378"/>
        <dbReference type="ChEBI" id="CHEBI:15980"/>
        <dbReference type="ChEBI" id="CHEBI:29032"/>
        <dbReference type="ChEBI" id="CHEBI:30616"/>
        <dbReference type="ChEBI" id="CHEBI:33019"/>
        <dbReference type="ChEBI" id="CHEBI:57966"/>
        <dbReference type="ChEBI" id="CHEBI:456215"/>
        <dbReference type="EC" id="6.3.2.1"/>
    </reaction>
</comment>
<comment type="pathway">
    <text evidence="1">Cofactor biosynthesis; (R)-pantothenate biosynthesis; (R)-pantothenate from (R)-pantoate and beta-alanine: step 1/1.</text>
</comment>
<comment type="subunit">
    <text evidence="1">Homodimer.</text>
</comment>
<comment type="subcellular location">
    <subcellularLocation>
        <location evidence="1">Cytoplasm</location>
    </subcellularLocation>
</comment>
<comment type="miscellaneous">
    <text evidence="1">The reaction proceeds by a bi uni uni bi ping pong mechanism.</text>
</comment>
<comment type="similarity">
    <text evidence="1">Belongs to the pantothenate synthetase family.</text>
</comment>
<sequence>MSAPILRKLADLRAATAGWKRAGESIGVVPTMGALHDGHLSLVAAAKAGCDRVVVTIFVNPKQFNNPEDLAKYPRTELADASKLAPYGVDAIYVPDPDQIYPEGFATTVSVSGLTDVMEGACRPGHFDGVATVVAKLFLQTGADQAYFGEKDYQQMMLVTRMAQDLDIPITVVGCPTVREASGLAMSSRNMRLSAEGLERAGRLHPVMRQVAERLAAGASFGDLAPGAREALGAAGFVDIEYFDLRAADSLRALDRPTEPARLLVAAWLDGVRLIDNIAVSQLND</sequence>
<proteinExistence type="inferred from homology"/>
<dbReference type="EC" id="6.3.2.1" evidence="1"/>
<dbReference type="EMBL" id="CP000031">
    <property type="protein sequence ID" value="AAV93434.1"/>
    <property type="molecule type" value="Genomic_DNA"/>
</dbReference>
<dbReference type="RefSeq" id="WP_011045876.1">
    <property type="nucleotide sequence ID" value="NC_003911.12"/>
</dbReference>
<dbReference type="SMR" id="Q5LWR2"/>
<dbReference type="STRING" id="246200.SPO0103"/>
<dbReference type="PaxDb" id="246200-SPO0103"/>
<dbReference type="KEGG" id="sil:SPO0103"/>
<dbReference type="eggNOG" id="COG0414">
    <property type="taxonomic scope" value="Bacteria"/>
</dbReference>
<dbReference type="HOGENOM" id="CLU_047148_0_0_5"/>
<dbReference type="OrthoDB" id="9773087at2"/>
<dbReference type="UniPathway" id="UPA00028">
    <property type="reaction ID" value="UER00005"/>
</dbReference>
<dbReference type="Proteomes" id="UP000001023">
    <property type="component" value="Chromosome"/>
</dbReference>
<dbReference type="GO" id="GO:0005829">
    <property type="term" value="C:cytosol"/>
    <property type="evidence" value="ECO:0007669"/>
    <property type="project" value="TreeGrafter"/>
</dbReference>
<dbReference type="GO" id="GO:0005524">
    <property type="term" value="F:ATP binding"/>
    <property type="evidence" value="ECO:0007669"/>
    <property type="project" value="UniProtKB-KW"/>
</dbReference>
<dbReference type="GO" id="GO:0004592">
    <property type="term" value="F:pantoate-beta-alanine ligase activity"/>
    <property type="evidence" value="ECO:0007669"/>
    <property type="project" value="UniProtKB-UniRule"/>
</dbReference>
<dbReference type="GO" id="GO:0015940">
    <property type="term" value="P:pantothenate biosynthetic process"/>
    <property type="evidence" value="ECO:0007669"/>
    <property type="project" value="UniProtKB-UniRule"/>
</dbReference>
<dbReference type="CDD" id="cd00560">
    <property type="entry name" value="PanC"/>
    <property type="match status" value="1"/>
</dbReference>
<dbReference type="Gene3D" id="3.40.50.620">
    <property type="entry name" value="HUPs"/>
    <property type="match status" value="1"/>
</dbReference>
<dbReference type="Gene3D" id="3.30.1300.10">
    <property type="entry name" value="Pantoate-beta-alanine ligase, C-terminal domain"/>
    <property type="match status" value="1"/>
</dbReference>
<dbReference type="HAMAP" id="MF_00158">
    <property type="entry name" value="PanC"/>
    <property type="match status" value="1"/>
</dbReference>
<dbReference type="InterPro" id="IPR004821">
    <property type="entry name" value="Cyt_trans-like"/>
</dbReference>
<dbReference type="InterPro" id="IPR003721">
    <property type="entry name" value="Pantoate_ligase"/>
</dbReference>
<dbReference type="InterPro" id="IPR042176">
    <property type="entry name" value="Pantoate_ligase_C"/>
</dbReference>
<dbReference type="InterPro" id="IPR014729">
    <property type="entry name" value="Rossmann-like_a/b/a_fold"/>
</dbReference>
<dbReference type="NCBIfam" id="TIGR00125">
    <property type="entry name" value="cyt_tran_rel"/>
    <property type="match status" value="1"/>
</dbReference>
<dbReference type="NCBIfam" id="TIGR00018">
    <property type="entry name" value="panC"/>
    <property type="match status" value="1"/>
</dbReference>
<dbReference type="PANTHER" id="PTHR21299">
    <property type="entry name" value="CYTIDYLATE KINASE/PANTOATE-BETA-ALANINE LIGASE"/>
    <property type="match status" value="1"/>
</dbReference>
<dbReference type="PANTHER" id="PTHR21299:SF1">
    <property type="entry name" value="PANTOATE--BETA-ALANINE LIGASE"/>
    <property type="match status" value="1"/>
</dbReference>
<dbReference type="Pfam" id="PF02569">
    <property type="entry name" value="Pantoate_ligase"/>
    <property type="match status" value="1"/>
</dbReference>
<dbReference type="SUPFAM" id="SSF52374">
    <property type="entry name" value="Nucleotidylyl transferase"/>
    <property type="match status" value="1"/>
</dbReference>